<dbReference type="EMBL" id="AF024571">
    <property type="protein sequence ID" value="AAC38087.1"/>
    <property type="status" value="ALT_FRAME"/>
    <property type="molecule type" value="Genomic_DNA"/>
</dbReference>
<dbReference type="EMBL" id="CP000253">
    <property type="protein sequence ID" value="ABD31169.1"/>
    <property type="molecule type" value="Genomic_DNA"/>
</dbReference>
<dbReference type="PIR" id="T48676">
    <property type="entry name" value="T48676"/>
</dbReference>
<dbReference type="RefSeq" id="WP_000957020.1">
    <property type="nucleotide sequence ID" value="NZ_LS483365.1"/>
</dbReference>
<dbReference type="RefSeq" id="YP_500611.1">
    <property type="nucleotide sequence ID" value="NC_007795.1"/>
</dbReference>
<dbReference type="SMR" id="Q2FWY7"/>
<dbReference type="STRING" id="93061.SAOUHSC_02119"/>
<dbReference type="PaxDb" id="1280-SAXN108_2002"/>
<dbReference type="GeneID" id="3921191"/>
<dbReference type="KEGG" id="sao:SAOUHSC_02119"/>
<dbReference type="PATRIC" id="fig|93061.5.peg.1923"/>
<dbReference type="eggNOG" id="COG0591">
    <property type="taxonomic scope" value="Bacteria"/>
</dbReference>
<dbReference type="HOGENOM" id="CLU_018808_15_2_9"/>
<dbReference type="OrthoDB" id="9810181at2"/>
<dbReference type="PRO" id="PR:Q2FWY7"/>
<dbReference type="Proteomes" id="UP000008816">
    <property type="component" value="Chromosome"/>
</dbReference>
<dbReference type="GO" id="GO:0005886">
    <property type="term" value="C:plasma membrane"/>
    <property type="evidence" value="ECO:0000318"/>
    <property type="project" value="GO_Central"/>
</dbReference>
<dbReference type="GO" id="GO:0015193">
    <property type="term" value="F:L-proline transmembrane transporter activity"/>
    <property type="evidence" value="ECO:0000318"/>
    <property type="project" value="GO_Central"/>
</dbReference>
<dbReference type="GO" id="GO:0005298">
    <property type="term" value="F:proline:sodium symporter activity"/>
    <property type="evidence" value="ECO:0000318"/>
    <property type="project" value="GO_Central"/>
</dbReference>
<dbReference type="GO" id="GO:0031402">
    <property type="term" value="F:sodium ion binding"/>
    <property type="evidence" value="ECO:0007669"/>
    <property type="project" value="InterPro"/>
</dbReference>
<dbReference type="GO" id="GO:0015824">
    <property type="term" value="P:proline transport"/>
    <property type="evidence" value="ECO:0000318"/>
    <property type="project" value="GO_Central"/>
</dbReference>
<dbReference type="GO" id="GO:0055085">
    <property type="term" value="P:transmembrane transport"/>
    <property type="evidence" value="ECO:0000318"/>
    <property type="project" value="GO_Central"/>
</dbReference>
<dbReference type="CDD" id="cd11475">
    <property type="entry name" value="SLC5sbd_PutP"/>
    <property type="match status" value="1"/>
</dbReference>
<dbReference type="FunFam" id="1.20.1730.10:FF:000002">
    <property type="entry name" value="Sodium/proline symporter"/>
    <property type="match status" value="1"/>
</dbReference>
<dbReference type="Gene3D" id="1.20.1730.10">
    <property type="entry name" value="Sodium/glucose cotransporter"/>
    <property type="match status" value="1"/>
</dbReference>
<dbReference type="InterPro" id="IPR038377">
    <property type="entry name" value="Na/Glc_symporter_sf"/>
</dbReference>
<dbReference type="InterPro" id="IPR011851">
    <property type="entry name" value="Na/Pro_symporter"/>
</dbReference>
<dbReference type="InterPro" id="IPR001734">
    <property type="entry name" value="Na/solute_symporter"/>
</dbReference>
<dbReference type="InterPro" id="IPR050277">
    <property type="entry name" value="Sodium:Solute_Symporter"/>
</dbReference>
<dbReference type="NCBIfam" id="TIGR02121">
    <property type="entry name" value="Na_Pro_sym"/>
    <property type="match status" value="1"/>
</dbReference>
<dbReference type="NCBIfam" id="TIGR00813">
    <property type="entry name" value="sss"/>
    <property type="match status" value="1"/>
</dbReference>
<dbReference type="PANTHER" id="PTHR48086">
    <property type="entry name" value="SODIUM/PROLINE SYMPORTER-RELATED"/>
    <property type="match status" value="1"/>
</dbReference>
<dbReference type="PANTHER" id="PTHR48086:SF3">
    <property type="entry name" value="SODIUM_PROLINE SYMPORTER"/>
    <property type="match status" value="1"/>
</dbReference>
<dbReference type="Pfam" id="PF00474">
    <property type="entry name" value="SSF"/>
    <property type="match status" value="1"/>
</dbReference>
<dbReference type="PROSITE" id="PS50283">
    <property type="entry name" value="NA_SOLUT_SYMP_3"/>
    <property type="match status" value="1"/>
</dbReference>
<feature type="chain" id="PRO_0000364102" description="Sodium/proline symporter">
    <location>
        <begin position="1"/>
        <end position="512"/>
    </location>
</feature>
<feature type="transmembrane region" description="Helical" evidence="2">
    <location>
        <begin position="16"/>
        <end position="36"/>
    </location>
</feature>
<feature type="transmembrane region" description="Helical" evidence="2">
    <location>
        <begin position="54"/>
        <end position="74"/>
    </location>
</feature>
<feature type="transmembrane region" description="Helical" evidence="2">
    <location>
        <begin position="85"/>
        <end position="105"/>
    </location>
</feature>
<feature type="transmembrane region" description="Helical" evidence="2">
    <location>
        <begin position="139"/>
        <end position="159"/>
    </location>
</feature>
<feature type="transmembrane region" description="Helical" evidence="2">
    <location>
        <begin position="174"/>
        <end position="194"/>
    </location>
</feature>
<feature type="transmembrane region" description="Helical" evidence="2">
    <location>
        <begin position="200"/>
        <end position="220"/>
    </location>
</feature>
<feature type="transmembrane region" description="Helical" evidence="2">
    <location>
        <begin position="240"/>
        <end position="260"/>
    </location>
</feature>
<feature type="transmembrane region" description="Helical" evidence="2">
    <location>
        <begin position="286"/>
        <end position="306"/>
    </location>
</feature>
<feature type="transmembrane region" description="Helical" evidence="2">
    <location>
        <begin position="327"/>
        <end position="347"/>
    </location>
</feature>
<feature type="transmembrane region" description="Helical" evidence="2">
    <location>
        <begin position="381"/>
        <end position="401"/>
    </location>
</feature>
<feature type="transmembrane region" description="Helical" evidence="2">
    <location>
        <begin position="410"/>
        <end position="430"/>
    </location>
</feature>
<feature type="transmembrane region" description="Helical" evidence="2">
    <location>
        <begin position="438"/>
        <end position="458"/>
    </location>
</feature>
<feature type="transmembrane region" description="Helical" evidence="2">
    <location>
        <begin position="467"/>
        <end position="487"/>
    </location>
</feature>
<feature type="sequence conflict" description="In Ref. 1; AAC38087." evidence="7" ref="1">
    <original>IVIGFYG</original>
    <variation>MLLAFT</variation>
    <location>
        <begin position="30"/>
        <end position="36"/>
    </location>
</feature>
<feature type="sequence conflict" description="In Ref. 1; AAC38087." evidence="7" ref="1">
    <original>V</original>
    <variation>I</variation>
    <location>
        <position position="146"/>
    </location>
</feature>
<protein>
    <recommendedName>
        <fullName>Sodium/proline symporter</fullName>
    </recommendedName>
    <alternativeName>
        <fullName evidence="6">Proline permease</fullName>
    </alternativeName>
</protein>
<gene>
    <name evidence="6" type="primary">putP</name>
    <name type="ordered locus">SAOUHSC_02119</name>
</gene>
<proteinExistence type="evidence at protein level"/>
<evidence type="ECO:0000250" key="1">
    <source>
        <dbReference type="UniProtKB" id="P07117"/>
    </source>
</evidence>
<evidence type="ECO:0000255" key="2"/>
<evidence type="ECO:0000269" key="3">
    <source>
    </source>
</evidence>
<evidence type="ECO:0000269" key="4">
    <source>
    </source>
</evidence>
<evidence type="ECO:0000269" key="5">
    <source>
    </source>
</evidence>
<evidence type="ECO:0000303" key="6">
    <source>
    </source>
</evidence>
<evidence type="ECO:0000305" key="7"/>
<accession>Q2FWY7</accession>
<accession>O30986</accession>
<name>PUTP_STAA8</name>
<sequence>MLTMGTALSQQVDANWQTYIMIAVYFLILIVIGFYGYKQATGNLSEYMLGGRSIGPYITALSAGASDMSGWMIMGLPGSVYSTGLSAMWITIGLTLGAYINYFVVAPRLRVYTELAGDAITLPDFFKNRLNDKNNVLKIISGLIIVVFFTLYTHSGFVSGGKLFESAFGLDYHFGLILVAFIVIFYTFFGGYLAVSITDFFQGVIMLIAMVMVPIVAMMNLNGWGTFHDVAAMKPTNLNLFKGLSFIGIISLFSWGLGYFGQPHIIVRFMSIKSHKMLPKARRLGISWMAVGLLGAVAVGLTGIAFVPAYHIKLEDPETLFIVMSQVLFHPLVGGFLLAAILAAIMSTISSQLLVTSSSLTEDFYKLIRGEEKAKTHQKEFVMIGRLSVLVVAIVAIAIAWNPNDTILNLVGNAWAGFGASFSPLVLFALYWKGLTRAGAVSGMVSGALVVIVWIAWIKPLAHINEIFGLYEIIPGFIVSVIVTYVVSKLTKKPGAFVETDLNKVRDIVREK</sequence>
<reference key="1">
    <citation type="journal article" date="1998" name="Infect. Immun.">
        <title>Identification and characterization of the putP proline permease that contributes to in vivo survival of Staphylococcus aureus in animal models.</title>
        <authorList>
            <person name="Schwan W.R."/>
            <person name="Coulter S.N."/>
            <person name="Ng E.Y.W."/>
            <person name="Langhorne M.H."/>
            <person name="Ritchie H.D."/>
            <person name="Brody L.L."/>
            <person name="Westbrock-Wadman S."/>
            <person name="Bayer A.S."/>
            <person name="Folger K.R."/>
            <person name="Stover C.K."/>
        </authorList>
    </citation>
    <scope>NUCLEOTIDE SEQUENCE [GENOMIC DNA]</scope>
    <scope>DISRUPTION PHENOTYPE</scope>
    <scope>FUNCTION IN PROLINE UPTAKE</scope>
</reference>
<reference key="2">
    <citation type="book" date="2006" name="Gram positive pathogens, 2nd edition">
        <title>The Staphylococcus aureus NCTC 8325 genome.</title>
        <editorList>
            <person name="Fischetti V."/>
            <person name="Novick R."/>
            <person name="Ferretti J."/>
            <person name="Portnoy D."/>
            <person name="Rood J."/>
        </editorList>
        <authorList>
            <person name="Gillaspy A.F."/>
            <person name="Worrell V."/>
            <person name="Orvis J."/>
            <person name="Roe B.A."/>
            <person name="Dyer D.W."/>
            <person name="Iandolo J.J."/>
        </authorList>
    </citation>
    <scope>NUCLEOTIDE SEQUENCE [LARGE SCALE GENOMIC DNA]</scope>
    <source>
        <strain>NCTC 8325 / PS 47</strain>
    </source>
</reference>
<reference key="3">
    <citation type="journal article" date="1999" name="Infect. Immun.">
        <title>Impact of the high-affinity proline permease gene (putP) on the virulence of Staphylococcus aureus in experimental endocarditis.</title>
        <authorList>
            <person name="Bayer A.S."/>
            <person name="Coulter S.N."/>
            <person name="Stover C.K."/>
            <person name="Schwan W.R."/>
        </authorList>
    </citation>
    <scope>DISRUPTION PHENOTYPE</scope>
</reference>
<reference key="4">
    <citation type="journal article" date="2006" name="Infect. Immun.">
        <title>Transcriptional activation of the Staphylococcus aureus putP gene by low-proline-high osmotic conditions and during infection of murine and human tissues.</title>
        <authorList>
            <person name="Schwan W.R."/>
            <person name="Lehmann L."/>
            <person name="McCormick J."/>
        </authorList>
    </citation>
    <scope>INDUCTION BY NACL AND L-PROLINE</scope>
</reference>
<organism>
    <name type="scientific">Staphylococcus aureus (strain NCTC 8325 / PS 47)</name>
    <dbReference type="NCBI Taxonomy" id="93061"/>
    <lineage>
        <taxon>Bacteria</taxon>
        <taxon>Bacillati</taxon>
        <taxon>Bacillota</taxon>
        <taxon>Bacilli</taxon>
        <taxon>Bacillales</taxon>
        <taxon>Staphylococcaceae</taxon>
        <taxon>Staphylococcus</taxon>
    </lineage>
</organism>
<keyword id="KW-0029">Amino-acid transport</keyword>
<keyword id="KW-1003">Cell membrane</keyword>
<keyword id="KW-0406">Ion transport</keyword>
<keyword id="KW-0472">Membrane</keyword>
<keyword id="KW-1185">Reference proteome</keyword>
<keyword id="KW-0915">Sodium</keyword>
<keyword id="KW-0739">Sodium transport</keyword>
<keyword id="KW-0769">Symport</keyword>
<keyword id="KW-0812">Transmembrane</keyword>
<keyword id="KW-1133">Transmembrane helix</keyword>
<keyword id="KW-0813">Transport</keyword>
<comment type="function">
    <text evidence="1 4">Catalyzes the sodium-dependent uptake of extracellular L-proline (By similarity). Since most S.aureus strains are L-proline auxotrophs, this transporter may aid the bacterial persistence during an infection of tissues with low proline concentrations (PubMed:9453610).</text>
</comment>
<comment type="catalytic activity">
    <reaction evidence="1">
        <text>L-proline(in) + Na(+)(in) = L-proline(out) + Na(+)(out)</text>
        <dbReference type="Rhea" id="RHEA:28967"/>
        <dbReference type="ChEBI" id="CHEBI:29101"/>
        <dbReference type="ChEBI" id="CHEBI:60039"/>
    </reaction>
</comment>
<comment type="subcellular location">
    <subcellularLocation>
        <location evidence="7">Cell membrane</location>
        <topology evidence="2">Multi-pass membrane protein</topology>
    </subcellularLocation>
</comment>
<comment type="induction">
    <text evidence="3">Up-regulated by high osmotic environment, such as increasing concentrations of NaCl, and low L-proline concentrations.</text>
</comment>
<comment type="disruption phenotype">
    <text evidence="4 5">Cells lacking this gene display an approximate 33% overall decline in L-proline uptake and exhibit significantly reduced virulence in several animal models, thus showing a negative impact on the ability of this pathogen to survive in vivo.</text>
</comment>
<comment type="similarity">
    <text evidence="7">Belongs to the sodium:solute symporter (SSF) (TC 2.A.21) family.</text>
</comment>
<comment type="sequence caution" evidence="7">
    <conflict type="frameshift">
        <sequence resource="EMBL-CDS" id="AAC38087"/>
    </conflict>
</comment>